<organism>
    <name type="scientific">Leptospira biflexa serovar Patoc (strain Patoc 1 / Ames)</name>
    <dbReference type="NCBI Taxonomy" id="355278"/>
    <lineage>
        <taxon>Bacteria</taxon>
        <taxon>Pseudomonadati</taxon>
        <taxon>Spirochaetota</taxon>
        <taxon>Spirochaetia</taxon>
        <taxon>Leptospirales</taxon>
        <taxon>Leptospiraceae</taxon>
        <taxon>Leptospira</taxon>
    </lineage>
</organism>
<evidence type="ECO:0000255" key="1">
    <source>
        <dbReference type="HAMAP-Rule" id="MF_00204"/>
    </source>
</evidence>
<sequence length="664" mass="76205">MANFKMVSPFKAAGDQVKAIENIAKSFGEGKNKITLVGVTGSGKTFTMAEVITRVKKPTLILSHNKTLAAQLFREFKEFFPENAVEYFVSYYDYYQPEAYVPSSDTFIEKDMSMNEEIDKLRLRATSSLLERDDVIIVSSVSCIYGLGSPEDYMNSVVMLQVGDKIDRDQIIRKFLHIQYARNDIDFSRGNFRVRGDTIEIMPSYQEEGIRIELFGDEIDGLSKIDPLTGKVKIKLDRVVVYPAKHFITSGPKIKDAMEKIKEEMAAQKEYFLKQGKHLEAERIESRTNYDMEMLLELGYCSGIENYSRHLTGRAEGERPACLLDYFPGKDFLLIIDESHVTLPQIGGMYAGDRSRKQTLVEFGFRLPSALDNRPLNFTEFEAMTPRTLYVSATPDQNELNKSEAVFEQIIRPTGLLDPVVEVRPTTNQIEDLLNEIRLRINQKERVLITTLTKKMSEDLTDYYKEVGLKIAYLHSEIDTIERTEIIRDLRKGVYDCIVGINLLREGLDIPEVSLVAILDADKEGFLRNYKSLVQTIGRAARNVNGKAILYADRMTDSIKKAMSETERRRLIQEAHNEKMGITPQTIQKEIHDILPREMAEEDSKEEALKDLEKEFTLKKYKTKDKLREALKREMLRYANDMDFEKAAMFRDKMLALGPDKIET</sequence>
<accession>B0SDE2</accession>
<proteinExistence type="inferred from homology"/>
<feature type="chain" id="PRO_1000200549" description="UvrABC system protein B">
    <location>
        <begin position="1"/>
        <end position="664"/>
    </location>
</feature>
<feature type="domain" description="Helicase ATP-binding" evidence="1">
    <location>
        <begin position="25"/>
        <end position="182"/>
    </location>
</feature>
<feature type="domain" description="Helicase C-terminal" evidence="1">
    <location>
        <begin position="429"/>
        <end position="595"/>
    </location>
</feature>
<feature type="domain" description="UVR" evidence="1">
    <location>
        <begin position="625"/>
        <end position="660"/>
    </location>
</feature>
<feature type="short sequence motif" description="Beta-hairpin">
    <location>
        <begin position="91"/>
        <end position="114"/>
    </location>
</feature>
<feature type="binding site" evidence="1">
    <location>
        <begin position="38"/>
        <end position="45"/>
    </location>
    <ligand>
        <name>ATP</name>
        <dbReference type="ChEBI" id="CHEBI:30616"/>
    </ligand>
</feature>
<gene>
    <name evidence="1" type="primary">uvrB</name>
    <name type="ordered locus">LBF_0814</name>
</gene>
<reference key="1">
    <citation type="journal article" date="2008" name="PLoS ONE">
        <title>Genome sequence of the saprophyte Leptospira biflexa provides insights into the evolution of Leptospira and the pathogenesis of leptospirosis.</title>
        <authorList>
            <person name="Picardeau M."/>
            <person name="Bulach D.M."/>
            <person name="Bouchier C."/>
            <person name="Zuerner R.L."/>
            <person name="Zidane N."/>
            <person name="Wilson P.J."/>
            <person name="Creno S."/>
            <person name="Kuczek E.S."/>
            <person name="Bommezzadri S."/>
            <person name="Davis J.C."/>
            <person name="McGrath A."/>
            <person name="Johnson M.J."/>
            <person name="Boursaux-Eude C."/>
            <person name="Seemann T."/>
            <person name="Rouy Z."/>
            <person name="Coppel R.L."/>
            <person name="Rood J.I."/>
            <person name="Lajus A."/>
            <person name="Davies J.K."/>
            <person name="Medigue C."/>
            <person name="Adler B."/>
        </authorList>
    </citation>
    <scope>NUCLEOTIDE SEQUENCE [LARGE SCALE GENOMIC DNA]</scope>
    <source>
        <strain>Patoc 1 / Ames</strain>
    </source>
</reference>
<dbReference type="EMBL" id="CP000777">
    <property type="protein sequence ID" value="ABZ93347.1"/>
    <property type="molecule type" value="Genomic_DNA"/>
</dbReference>
<dbReference type="RefSeq" id="WP_012387856.1">
    <property type="nucleotide sequence ID" value="NC_010842.1"/>
</dbReference>
<dbReference type="SMR" id="B0SDE2"/>
<dbReference type="KEGG" id="lbf:LBF_0814"/>
<dbReference type="HOGENOM" id="CLU_009621_2_1_12"/>
<dbReference type="GO" id="GO:0005737">
    <property type="term" value="C:cytoplasm"/>
    <property type="evidence" value="ECO:0007669"/>
    <property type="project" value="UniProtKB-SubCell"/>
</dbReference>
<dbReference type="GO" id="GO:0009380">
    <property type="term" value="C:excinuclease repair complex"/>
    <property type="evidence" value="ECO:0007669"/>
    <property type="project" value="InterPro"/>
</dbReference>
<dbReference type="GO" id="GO:0005524">
    <property type="term" value="F:ATP binding"/>
    <property type="evidence" value="ECO:0007669"/>
    <property type="project" value="UniProtKB-UniRule"/>
</dbReference>
<dbReference type="GO" id="GO:0016887">
    <property type="term" value="F:ATP hydrolysis activity"/>
    <property type="evidence" value="ECO:0007669"/>
    <property type="project" value="InterPro"/>
</dbReference>
<dbReference type="GO" id="GO:0003677">
    <property type="term" value="F:DNA binding"/>
    <property type="evidence" value="ECO:0007669"/>
    <property type="project" value="UniProtKB-UniRule"/>
</dbReference>
<dbReference type="GO" id="GO:0009381">
    <property type="term" value="F:excinuclease ABC activity"/>
    <property type="evidence" value="ECO:0007669"/>
    <property type="project" value="UniProtKB-UniRule"/>
</dbReference>
<dbReference type="GO" id="GO:0004386">
    <property type="term" value="F:helicase activity"/>
    <property type="evidence" value="ECO:0007669"/>
    <property type="project" value="UniProtKB-KW"/>
</dbReference>
<dbReference type="GO" id="GO:0006289">
    <property type="term" value="P:nucleotide-excision repair"/>
    <property type="evidence" value="ECO:0007669"/>
    <property type="project" value="UniProtKB-UniRule"/>
</dbReference>
<dbReference type="GO" id="GO:0009432">
    <property type="term" value="P:SOS response"/>
    <property type="evidence" value="ECO:0007669"/>
    <property type="project" value="UniProtKB-UniRule"/>
</dbReference>
<dbReference type="CDD" id="cd17916">
    <property type="entry name" value="DEXHc_UvrB"/>
    <property type="match status" value="1"/>
</dbReference>
<dbReference type="CDD" id="cd18790">
    <property type="entry name" value="SF2_C_UvrB"/>
    <property type="match status" value="1"/>
</dbReference>
<dbReference type="Gene3D" id="3.40.50.300">
    <property type="entry name" value="P-loop containing nucleotide triphosphate hydrolases"/>
    <property type="match status" value="3"/>
</dbReference>
<dbReference type="Gene3D" id="4.10.860.10">
    <property type="entry name" value="UVR domain"/>
    <property type="match status" value="1"/>
</dbReference>
<dbReference type="HAMAP" id="MF_00204">
    <property type="entry name" value="UvrB"/>
    <property type="match status" value="1"/>
</dbReference>
<dbReference type="InterPro" id="IPR006935">
    <property type="entry name" value="Helicase/UvrB_N"/>
</dbReference>
<dbReference type="InterPro" id="IPR014001">
    <property type="entry name" value="Helicase_ATP-bd"/>
</dbReference>
<dbReference type="InterPro" id="IPR001650">
    <property type="entry name" value="Helicase_C-like"/>
</dbReference>
<dbReference type="InterPro" id="IPR027417">
    <property type="entry name" value="P-loop_NTPase"/>
</dbReference>
<dbReference type="InterPro" id="IPR001943">
    <property type="entry name" value="UVR_dom"/>
</dbReference>
<dbReference type="InterPro" id="IPR036876">
    <property type="entry name" value="UVR_dom_sf"/>
</dbReference>
<dbReference type="InterPro" id="IPR004807">
    <property type="entry name" value="UvrB"/>
</dbReference>
<dbReference type="InterPro" id="IPR041471">
    <property type="entry name" value="UvrB_inter"/>
</dbReference>
<dbReference type="InterPro" id="IPR024759">
    <property type="entry name" value="UvrB_YAD/RRR_dom"/>
</dbReference>
<dbReference type="NCBIfam" id="NF003673">
    <property type="entry name" value="PRK05298.1"/>
    <property type="match status" value="1"/>
</dbReference>
<dbReference type="NCBIfam" id="TIGR00631">
    <property type="entry name" value="uvrb"/>
    <property type="match status" value="1"/>
</dbReference>
<dbReference type="PANTHER" id="PTHR24029">
    <property type="entry name" value="UVRABC SYSTEM PROTEIN B"/>
    <property type="match status" value="1"/>
</dbReference>
<dbReference type="PANTHER" id="PTHR24029:SF0">
    <property type="entry name" value="UVRABC SYSTEM PROTEIN B"/>
    <property type="match status" value="1"/>
</dbReference>
<dbReference type="Pfam" id="PF00271">
    <property type="entry name" value="Helicase_C"/>
    <property type="match status" value="1"/>
</dbReference>
<dbReference type="Pfam" id="PF04851">
    <property type="entry name" value="ResIII"/>
    <property type="match status" value="1"/>
</dbReference>
<dbReference type="Pfam" id="PF02151">
    <property type="entry name" value="UVR"/>
    <property type="match status" value="1"/>
</dbReference>
<dbReference type="Pfam" id="PF12344">
    <property type="entry name" value="UvrB"/>
    <property type="match status" value="1"/>
</dbReference>
<dbReference type="Pfam" id="PF17757">
    <property type="entry name" value="UvrB_inter"/>
    <property type="match status" value="1"/>
</dbReference>
<dbReference type="SMART" id="SM00487">
    <property type="entry name" value="DEXDc"/>
    <property type="match status" value="1"/>
</dbReference>
<dbReference type="SMART" id="SM00490">
    <property type="entry name" value="HELICc"/>
    <property type="match status" value="1"/>
</dbReference>
<dbReference type="SUPFAM" id="SSF46600">
    <property type="entry name" value="C-terminal UvrC-binding domain of UvrB"/>
    <property type="match status" value="1"/>
</dbReference>
<dbReference type="SUPFAM" id="SSF52540">
    <property type="entry name" value="P-loop containing nucleoside triphosphate hydrolases"/>
    <property type="match status" value="2"/>
</dbReference>
<dbReference type="PROSITE" id="PS51192">
    <property type="entry name" value="HELICASE_ATP_BIND_1"/>
    <property type="match status" value="1"/>
</dbReference>
<dbReference type="PROSITE" id="PS51194">
    <property type="entry name" value="HELICASE_CTER"/>
    <property type="match status" value="1"/>
</dbReference>
<dbReference type="PROSITE" id="PS50151">
    <property type="entry name" value="UVR"/>
    <property type="match status" value="1"/>
</dbReference>
<name>UVRB_LEPBA</name>
<keyword id="KW-0067">ATP-binding</keyword>
<keyword id="KW-0963">Cytoplasm</keyword>
<keyword id="KW-0227">DNA damage</keyword>
<keyword id="KW-0228">DNA excision</keyword>
<keyword id="KW-0234">DNA repair</keyword>
<keyword id="KW-0267">Excision nuclease</keyword>
<keyword id="KW-0347">Helicase</keyword>
<keyword id="KW-0378">Hydrolase</keyword>
<keyword id="KW-0547">Nucleotide-binding</keyword>
<keyword id="KW-0742">SOS response</keyword>
<protein>
    <recommendedName>
        <fullName evidence="1">UvrABC system protein B</fullName>
        <shortName evidence="1">Protein UvrB</shortName>
    </recommendedName>
    <alternativeName>
        <fullName evidence="1">Excinuclease ABC subunit B</fullName>
    </alternativeName>
</protein>
<comment type="function">
    <text evidence="1">The UvrABC repair system catalyzes the recognition and processing of DNA lesions. A damage recognition complex composed of 2 UvrA and 2 UvrB subunits scans DNA for abnormalities. Upon binding of the UvrA(2)B(2) complex to a putative damaged site, the DNA wraps around one UvrB monomer. DNA wrap is dependent on ATP binding by UvrB and probably causes local melting of the DNA helix, facilitating insertion of UvrB beta-hairpin between the DNA strands. Then UvrB probes one DNA strand for the presence of a lesion. If a lesion is found the UvrA subunits dissociate and the UvrB-DNA preincision complex is formed. This complex is subsequently bound by UvrC and the second UvrB is released. If no lesion is found, the DNA wraps around the other UvrB subunit that will check the other stand for damage.</text>
</comment>
<comment type="subunit">
    <text evidence="1">Forms a heterotetramer with UvrA during the search for lesions. Interacts with UvrC in an incision complex.</text>
</comment>
<comment type="subcellular location">
    <subcellularLocation>
        <location evidence="1">Cytoplasm</location>
    </subcellularLocation>
</comment>
<comment type="domain">
    <text evidence="1">The beta-hairpin motif is involved in DNA binding.</text>
</comment>
<comment type="similarity">
    <text evidence="1">Belongs to the UvrB family.</text>
</comment>